<proteinExistence type="inferred from homology"/>
<sequence length="83" mass="8983">MNTATGVIALLVLATVIGCIEAETRADLQGAFESYEGEAAEKIFRRSPTCIPSGQPCPYNENCCSKSCTYKEMKTATPVQRCD</sequence>
<accession>S0F1M4</accession>
<name>TO1A_HADVN</name>
<feature type="signal peptide" evidence="3">
    <location>
        <begin position="1"/>
        <end position="22"/>
    </location>
</feature>
<feature type="propeptide" id="PRO_0000430910" evidence="1">
    <location>
        <begin position="23"/>
        <end position="44"/>
    </location>
</feature>
<feature type="chain" id="PRO_0000430911" description="Omega-hexatoxin-Hvn1a">
    <location>
        <begin position="47"/>
        <end position="83"/>
    </location>
</feature>
<feature type="site" description="Critical for insecticidal activity" evidence="2">
    <location>
        <position position="56"/>
    </location>
</feature>
<feature type="site" description="Critical for insecticidal activity" evidence="2">
    <location>
        <position position="81"/>
    </location>
</feature>
<feature type="disulfide bond" evidence="2">
    <location>
        <begin position="50"/>
        <end position="64"/>
    </location>
</feature>
<feature type="disulfide bond" evidence="2">
    <location>
        <begin position="57"/>
        <end position="68"/>
    </location>
</feature>
<feature type="disulfide bond" evidence="2">
    <location>
        <begin position="63"/>
        <end position="82"/>
    </location>
</feature>
<evidence type="ECO:0000250" key="1"/>
<evidence type="ECO:0000250" key="2">
    <source>
        <dbReference type="UniProtKB" id="P56207"/>
    </source>
</evidence>
<evidence type="ECO:0000255" key="3"/>
<evidence type="ECO:0000303" key="4">
    <source>
    </source>
</evidence>
<evidence type="ECO:0000305" key="5">
    <source>
    </source>
</evidence>
<comment type="function">
    <text evidence="2">Inhibits insect, but not mammalian, voltage-gated calcium channels (Cav).</text>
</comment>
<comment type="subcellular location">
    <subcellularLocation>
        <location evidence="5">Secreted</location>
    </subcellularLocation>
</comment>
<comment type="tissue specificity">
    <text evidence="5">Expressed by the venom gland.</text>
</comment>
<comment type="domain">
    <text evidence="1">The presence of a 'disulfide through disulfide knot' structurally defines this protein as a knottin.</text>
</comment>
<comment type="similarity">
    <text evidence="4">Belongs to the neurotoxin 08 (Shiva) family. 01 (omega toxin) subfamily.</text>
</comment>
<dbReference type="EMBL" id="HG001285">
    <property type="protein sequence ID" value="CDF44146.1"/>
    <property type="molecule type" value="mRNA"/>
</dbReference>
<dbReference type="SMR" id="S0F1M4"/>
<dbReference type="GO" id="GO:0005576">
    <property type="term" value="C:extracellular region"/>
    <property type="evidence" value="ECO:0007669"/>
    <property type="project" value="UniProtKB-SubCell"/>
</dbReference>
<dbReference type="GO" id="GO:0019855">
    <property type="term" value="F:calcium channel inhibitor activity"/>
    <property type="evidence" value="ECO:0007669"/>
    <property type="project" value="InterPro"/>
</dbReference>
<dbReference type="GO" id="GO:0090729">
    <property type="term" value="F:toxin activity"/>
    <property type="evidence" value="ECO:0007669"/>
    <property type="project" value="UniProtKB-KW"/>
</dbReference>
<dbReference type="GO" id="GO:0006952">
    <property type="term" value="P:defense response"/>
    <property type="evidence" value="ECO:0007669"/>
    <property type="project" value="InterPro"/>
</dbReference>
<dbReference type="InterPro" id="IPR009415">
    <property type="entry name" value="Omega-atracotox"/>
</dbReference>
<dbReference type="InterPro" id="IPR018071">
    <property type="entry name" value="Omega-atracotox_CS"/>
</dbReference>
<dbReference type="Pfam" id="PF06357">
    <property type="entry name" value="Omega-toxin"/>
    <property type="match status" value="1"/>
</dbReference>
<dbReference type="SUPFAM" id="SSF57059">
    <property type="entry name" value="omega toxin-like"/>
    <property type="match status" value="1"/>
</dbReference>
<dbReference type="PROSITE" id="PS60016">
    <property type="entry name" value="OMEGA_ACTX_1"/>
    <property type="match status" value="1"/>
</dbReference>
<reference key="1">
    <citation type="journal article" date="2014" name="BMC Genomics">
        <title>Diversification of a single ancestral gene into a successful toxin superfamily in highly venomous Australian funnel-web spiders.</title>
        <authorList>
            <person name="Pineda S.S."/>
            <person name="Sollod B.L."/>
            <person name="Wilson D."/>
            <person name="Darling A."/>
            <person name="Sunagar K."/>
            <person name="Undheim E.A."/>
            <person name="Kely L."/>
            <person name="Antunes A."/>
            <person name="Fry B.G."/>
            <person name="King G.F."/>
        </authorList>
    </citation>
    <scope>NUCLEOTIDE SEQUENCE [MRNA]</scope>
    <source>
        <tissue>Venom gland</tissue>
    </source>
</reference>
<organism>
    <name type="scientific">Hadronyche venenata</name>
    <name type="common">Tasmanian funnel-web spider</name>
    <name type="synonym">Atrax venenatus</name>
    <dbReference type="NCBI Taxonomy" id="1337083"/>
    <lineage>
        <taxon>Eukaryota</taxon>
        <taxon>Metazoa</taxon>
        <taxon>Ecdysozoa</taxon>
        <taxon>Arthropoda</taxon>
        <taxon>Chelicerata</taxon>
        <taxon>Arachnida</taxon>
        <taxon>Araneae</taxon>
        <taxon>Mygalomorphae</taxon>
        <taxon>Hexathelidae</taxon>
        <taxon>Hadronyche</taxon>
    </lineage>
</organism>
<keyword id="KW-0108">Calcium channel impairing toxin</keyword>
<keyword id="KW-0165">Cleavage on pair of basic residues</keyword>
<keyword id="KW-1015">Disulfide bond</keyword>
<keyword id="KW-0872">Ion channel impairing toxin</keyword>
<keyword id="KW-0960">Knottin</keyword>
<keyword id="KW-0964">Secreted</keyword>
<keyword id="KW-0732">Signal</keyword>
<keyword id="KW-0800">Toxin</keyword>
<keyword id="KW-1218">Voltage-gated calcium channel impairing toxin</keyword>
<protein>
    <recommendedName>
        <fullName evidence="4">Omega-hexatoxin-Hvn1a</fullName>
        <shortName evidence="5">Omega-HXTX-Hvn1a</shortName>
    </recommendedName>
</protein>